<evidence type="ECO:0000255" key="1">
    <source>
        <dbReference type="HAMAP-Rule" id="MF_00693"/>
    </source>
</evidence>
<proteinExistence type="inferred from homology"/>
<accession>B3E045</accession>
<name>Y651_METI4</name>
<sequence>MAGHSHWAKVKHQKGLTDIRKGKLFSKLSREISIAARLGGGDPTFNSRLRRAIANAKDEGVPLENITRAIQKGTGEIAGSHYEDVLYEGYGPGGVAVLIEAATDNRNRTTAEIRNLFSKYGGNLGAAGSVSWIFQKKGRIVLDGDQNDFDRVFEVALEAGAEDVEQKGSEIEVICLPEKLDELQKHLDTAGLTIKSSQITYLPKNSISVTDKETFKSLYRLLDILEDHDDVQNVYANFDAPQELLEQCE</sequence>
<feature type="chain" id="PRO_1000132211" description="Probable transcriptional regulatory protein Minf_0651">
    <location>
        <begin position="1"/>
        <end position="249"/>
    </location>
</feature>
<dbReference type="EMBL" id="CP000975">
    <property type="protein sequence ID" value="ACD82706.1"/>
    <property type="molecule type" value="Genomic_DNA"/>
</dbReference>
<dbReference type="RefSeq" id="WP_012462988.1">
    <property type="nucleotide sequence ID" value="NC_010794.1"/>
</dbReference>
<dbReference type="SMR" id="B3E045"/>
<dbReference type="STRING" id="481448.Minf_0651"/>
<dbReference type="KEGG" id="min:Minf_0651"/>
<dbReference type="eggNOG" id="COG0217">
    <property type="taxonomic scope" value="Bacteria"/>
</dbReference>
<dbReference type="HOGENOM" id="CLU_062974_2_2_0"/>
<dbReference type="OrthoDB" id="9781053at2"/>
<dbReference type="Proteomes" id="UP000009149">
    <property type="component" value="Chromosome"/>
</dbReference>
<dbReference type="GO" id="GO:0005829">
    <property type="term" value="C:cytosol"/>
    <property type="evidence" value="ECO:0007669"/>
    <property type="project" value="TreeGrafter"/>
</dbReference>
<dbReference type="GO" id="GO:0003677">
    <property type="term" value="F:DNA binding"/>
    <property type="evidence" value="ECO:0007669"/>
    <property type="project" value="UniProtKB-UniRule"/>
</dbReference>
<dbReference type="GO" id="GO:0006355">
    <property type="term" value="P:regulation of DNA-templated transcription"/>
    <property type="evidence" value="ECO:0007669"/>
    <property type="project" value="UniProtKB-UniRule"/>
</dbReference>
<dbReference type="FunFam" id="1.10.10.200:FF:000002">
    <property type="entry name" value="Probable transcriptional regulatory protein CLM62_37755"/>
    <property type="match status" value="1"/>
</dbReference>
<dbReference type="FunFam" id="3.30.70.980:FF:000002">
    <property type="entry name" value="Probable transcriptional regulatory protein YebC"/>
    <property type="match status" value="1"/>
</dbReference>
<dbReference type="Gene3D" id="1.10.10.200">
    <property type="match status" value="1"/>
</dbReference>
<dbReference type="Gene3D" id="3.30.70.980">
    <property type="match status" value="2"/>
</dbReference>
<dbReference type="HAMAP" id="MF_00693">
    <property type="entry name" value="Transcrip_reg_TACO1"/>
    <property type="match status" value="1"/>
</dbReference>
<dbReference type="InterPro" id="IPR017856">
    <property type="entry name" value="Integrase-like_N"/>
</dbReference>
<dbReference type="InterPro" id="IPR048300">
    <property type="entry name" value="TACO1_YebC-like_2nd/3rd_dom"/>
</dbReference>
<dbReference type="InterPro" id="IPR049083">
    <property type="entry name" value="TACO1_YebC_N"/>
</dbReference>
<dbReference type="InterPro" id="IPR002876">
    <property type="entry name" value="Transcrip_reg_TACO1-like"/>
</dbReference>
<dbReference type="InterPro" id="IPR026564">
    <property type="entry name" value="Transcrip_reg_TACO1-like_dom3"/>
</dbReference>
<dbReference type="InterPro" id="IPR029072">
    <property type="entry name" value="YebC-like"/>
</dbReference>
<dbReference type="NCBIfam" id="NF001030">
    <property type="entry name" value="PRK00110.1"/>
    <property type="match status" value="1"/>
</dbReference>
<dbReference type="NCBIfam" id="NF009044">
    <property type="entry name" value="PRK12378.1"/>
    <property type="match status" value="1"/>
</dbReference>
<dbReference type="NCBIfam" id="TIGR01033">
    <property type="entry name" value="YebC/PmpR family DNA-binding transcriptional regulator"/>
    <property type="match status" value="1"/>
</dbReference>
<dbReference type="PANTHER" id="PTHR12532:SF6">
    <property type="entry name" value="TRANSCRIPTIONAL REGULATORY PROTEIN YEBC-RELATED"/>
    <property type="match status" value="1"/>
</dbReference>
<dbReference type="PANTHER" id="PTHR12532">
    <property type="entry name" value="TRANSLATIONAL ACTIVATOR OF CYTOCHROME C OXIDASE 1"/>
    <property type="match status" value="1"/>
</dbReference>
<dbReference type="Pfam" id="PF20772">
    <property type="entry name" value="TACO1_YebC_N"/>
    <property type="match status" value="1"/>
</dbReference>
<dbReference type="Pfam" id="PF01709">
    <property type="entry name" value="Transcrip_reg"/>
    <property type="match status" value="1"/>
</dbReference>
<dbReference type="SUPFAM" id="SSF75625">
    <property type="entry name" value="YebC-like"/>
    <property type="match status" value="1"/>
</dbReference>
<protein>
    <recommendedName>
        <fullName evidence="1">Probable transcriptional regulatory protein Minf_0651</fullName>
    </recommendedName>
</protein>
<gene>
    <name type="ordered locus">Minf_0651</name>
</gene>
<comment type="subcellular location">
    <subcellularLocation>
        <location evidence="1">Cytoplasm</location>
    </subcellularLocation>
</comment>
<comment type="similarity">
    <text evidence="1">Belongs to the TACO1 family.</text>
</comment>
<organism>
    <name type="scientific">Methylacidiphilum infernorum (isolate V4)</name>
    <name type="common">Methylokorus infernorum (strain V4)</name>
    <dbReference type="NCBI Taxonomy" id="481448"/>
    <lineage>
        <taxon>Bacteria</taxon>
        <taxon>Pseudomonadati</taxon>
        <taxon>Verrucomicrobiota</taxon>
        <taxon>Methylacidiphilae</taxon>
        <taxon>Methylacidiphilales</taxon>
        <taxon>Methylacidiphilaceae</taxon>
        <taxon>Methylacidiphilum (ex Ratnadevi et al. 2023)</taxon>
    </lineage>
</organism>
<keyword id="KW-0963">Cytoplasm</keyword>
<keyword id="KW-0238">DNA-binding</keyword>
<keyword id="KW-0804">Transcription</keyword>
<keyword id="KW-0805">Transcription regulation</keyword>
<reference key="1">
    <citation type="journal article" date="2008" name="Biol. Direct">
        <title>Complete genome sequence of the extremely acidophilic methanotroph isolate V4, Methylacidiphilum infernorum, a representative of the bacterial phylum Verrucomicrobia.</title>
        <authorList>
            <person name="Hou S."/>
            <person name="Makarova K.S."/>
            <person name="Saw J.H."/>
            <person name="Senin P."/>
            <person name="Ly B.V."/>
            <person name="Zhou Z."/>
            <person name="Ren Y."/>
            <person name="Wang J."/>
            <person name="Galperin M.Y."/>
            <person name="Omelchenko M.V."/>
            <person name="Wolf Y.I."/>
            <person name="Yutin N."/>
            <person name="Koonin E.V."/>
            <person name="Stott M.B."/>
            <person name="Mountain B.W."/>
            <person name="Crowe M.A."/>
            <person name="Smirnova A.V."/>
            <person name="Dunfield P.F."/>
            <person name="Feng L."/>
            <person name="Wang L."/>
            <person name="Alam M."/>
        </authorList>
    </citation>
    <scope>NUCLEOTIDE SEQUENCE [LARGE SCALE GENOMIC DNA]</scope>
    <source>
        <strain>Isolate V4</strain>
    </source>
</reference>